<keyword id="KW-0027">Amidation</keyword>
<keyword id="KW-0878">Amphibian defense peptide</keyword>
<keyword id="KW-0044">Antibiotic</keyword>
<keyword id="KW-0929">Antimicrobial</keyword>
<keyword id="KW-0204">Cytolysis</keyword>
<keyword id="KW-0903">Direct protein sequencing</keyword>
<keyword id="KW-0295">Fungicide</keyword>
<keyword id="KW-0354">Hemolysis</keyword>
<keyword id="KW-0391">Immunity</keyword>
<keyword id="KW-0399">Innate immunity</keyword>
<keyword id="KW-0964">Secreted</keyword>
<protein>
    <recommendedName>
        <fullName evidence="5">Medusin-L1</fullName>
        <shortName evidence="5">MDS-L1</shortName>
    </recommendedName>
    <alternativeName>
        <fullName evidence="3">Phylloseptin-L1</fullName>
        <shortName evidence="4">PLS-L1</shortName>
    </alternativeName>
</protein>
<evidence type="ECO:0000250" key="1">
    <source>
        <dbReference type="UniProtKB" id="L0P329"/>
    </source>
</evidence>
<evidence type="ECO:0000269" key="2">
    <source>
    </source>
</evidence>
<evidence type="ECO:0000303" key="3">
    <source>
    </source>
</evidence>
<evidence type="ECO:0000303" key="4">
    <source>
    </source>
</evidence>
<evidence type="ECO:0000305" key="5"/>
<evidence type="ECO:0000305" key="6">
    <source>
    </source>
</evidence>
<accession>P0DQK9</accession>
<sequence>LLGMIPLAISAISALSKL</sequence>
<feature type="peptide" id="PRO_0000449601" description="Medusin-L1" evidence="2">
    <location>
        <begin position="1"/>
        <end position="18"/>
    </location>
</feature>
<feature type="modified residue" description="Leucine amide" evidence="2">
    <location>
        <position position="18"/>
    </location>
</feature>
<organism>
    <name type="scientific">Agalychnis lemur</name>
    <name type="common">Lemur leaf frog</name>
    <name type="synonym">Hylomantis lemur</name>
    <dbReference type="NCBI Taxonomy" id="317382"/>
    <lineage>
        <taxon>Eukaryota</taxon>
        <taxon>Metazoa</taxon>
        <taxon>Chordata</taxon>
        <taxon>Craniata</taxon>
        <taxon>Vertebrata</taxon>
        <taxon>Euteleostomi</taxon>
        <taxon>Amphibia</taxon>
        <taxon>Batrachia</taxon>
        <taxon>Anura</taxon>
        <taxon>Neobatrachia</taxon>
        <taxon>Hyloidea</taxon>
        <taxon>Hylidae</taxon>
        <taxon>Phyllomedusinae</taxon>
        <taxon>Agalychnis</taxon>
    </lineage>
</organism>
<dbReference type="GO" id="GO:0005576">
    <property type="term" value="C:extracellular region"/>
    <property type="evidence" value="ECO:0007669"/>
    <property type="project" value="UniProtKB-SubCell"/>
</dbReference>
<dbReference type="GO" id="GO:0042742">
    <property type="term" value="P:defense response to bacterium"/>
    <property type="evidence" value="ECO:0007669"/>
    <property type="project" value="UniProtKB-KW"/>
</dbReference>
<dbReference type="GO" id="GO:0050832">
    <property type="term" value="P:defense response to fungus"/>
    <property type="evidence" value="ECO:0007669"/>
    <property type="project" value="UniProtKB-KW"/>
</dbReference>
<dbReference type="GO" id="GO:0045087">
    <property type="term" value="P:innate immune response"/>
    <property type="evidence" value="ECO:0007669"/>
    <property type="project" value="UniProtKB-KW"/>
</dbReference>
<dbReference type="GO" id="GO:0031640">
    <property type="term" value="P:killing of cells of another organism"/>
    <property type="evidence" value="ECO:0007669"/>
    <property type="project" value="UniProtKB-KW"/>
</dbReference>
<name>MDS1_AGALE</name>
<reference key="1">
    <citation type="journal article" date="2007" name="Toxicon">
        <title>Peptides with differential cytolytic activity from skin secretions of the lemur leaf frog Hylomantis lemur (Hylidae: Phyllomedusinae).</title>
        <authorList>
            <person name="Conlon J.M."/>
            <person name="Woodhams D.C."/>
            <person name="Raza H."/>
            <person name="Coquet L."/>
            <person name="Leprince J."/>
            <person name="Jouenne T."/>
            <person name="Vaudry H."/>
            <person name="Rollins-Smith L.A."/>
        </authorList>
    </citation>
    <scope>PROTEIN SEQUENCE</scope>
    <scope>FUNCTION</scope>
    <scope>SUBCELLULAR LOCATION</scope>
    <scope>MASS SPECTROMETRY</scope>
    <scope>AMIDATION AT LEU-18</scope>
    <source>
        <tissue>Skin secretion</tissue>
    </source>
</reference>
<reference key="2">
    <citation type="journal article" date="2008" name="Peptides">
        <title>A consistent nomenclature of antimicrobial peptides isolated from frogs of the subfamily Phyllomedusinae.</title>
        <authorList>
            <person name="Amiche M."/>
            <person name="Ladram A."/>
            <person name="Nicolas P."/>
        </authorList>
    </citation>
    <scope>NOMENCLATURE</scope>
</reference>
<proteinExistence type="evidence at protein level"/>
<comment type="function">
    <text evidence="1 2">Antimicrobial peptide active against S.aureus (MIC=8 uM) but inactive against E.coli (PubMed:17561225). Also shows fungicide activity (By similarity). Also inhibits growth of B.dendrobatidis zoospores at high concentrations (above 25 uM) (PubMed:17561225). Shows anticancer activities since it is cytolytic against HepG2 human hepatoma-derived cells (LC(50)=35 uM) (PubMed:17561225). Is strongly hemolytic on human erythrocytes (LC(50)=40 uM) (PubMed:17561225).</text>
</comment>
<comment type="subcellular location">
    <subcellularLocation>
        <location evidence="2">Secreted</location>
    </subcellularLocation>
</comment>
<comment type="tissue specificity">
    <text evidence="6">Expressed by the skin glands.</text>
</comment>
<comment type="mass spectrometry"/>
<comment type="miscellaneous">
    <text evidence="5">The primary structure of this peptide is identical to that of Medusin-AC (AC L0P329) and of Medusin-AS (AC A0A5Q0MU22).</text>
</comment>
<comment type="similarity">
    <text evidence="5">Belongs to the frog skin active peptide (FSAP) family. Medusin subfamily.</text>
</comment>
<comment type="online information" name="The antimicrobial peptide database">
    <link uri="https://wangapd3.com/database/query_output.php?ID=0973"/>
</comment>